<gene>
    <name evidence="4" type="primary">PHB2</name>
    <name evidence="7" type="ORF">CH063_08657</name>
    <name evidence="8" type="ORF">CH63R_01101</name>
</gene>
<feature type="chain" id="PRO_0000461185" description="Prohibitin-2">
    <location>
        <begin position="1"/>
        <end position="311"/>
    </location>
</feature>
<feature type="transmembrane region" description="Helical" evidence="2">
    <location>
        <begin position="39"/>
        <end position="57"/>
    </location>
</feature>
<feature type="short sequence motif" description="AIM" evidence="1">
    <location>
        <begin position="141"/>
        <end position="144"/>
    </location>
</feature>
<organism evidence="9">
    <name type="scientific">Colletotrichum higginsianum (strain IMI 349063)</name>
    <name type="common">Crucifer anthracnose fungus</name>
    <dbReference type="NCBI Taxonomy" id="759273"/>
    <lineage>
        <taxon>Eukaryota</taxon>
        <taxon>Fungi</taxon>
        <taxon>Dikarya</taxon>
        <taxon>Ascomycota</taxon>
        <taxon>Pezizomycotina</taxon>
        <taxon>Sordariomycetes</taxon>
        <taxon>Hypocreomycetidae</taxon>
        <taxon>Glomerellales</taxon>
        <taxon>Glomerellaceae</taxon>
        <taxon>Colletotrichum</taxon>
        <taxon>Colletotrichum destructivum species complex</taxon>
    </lineage>
</organism>
<proteinExistence type="evidence at protein level"/>
<comment type="function">
    <text evidence="1 3">Prohibitin probably acts as a holdase/unfoldase for the stabilization of newly synthesized mitochondrial proteins (By similarity). Involved in mitophagy (PubMed:35835849). Required for the switch to necrotrophic growth (PubMed:35835849).</text>
</comment>
<comment type="subunit">
    <text evidence="1 3">The mitochondrial prohibitin complex consists of two subunits (PHB1 and PHB2) (PubMed:35835849). The subunits assemble into a membrane-associated ring-shaped supercomplex of approximately 1 mDa (By similarity). Interacts with ATG24/SNX4; the interaction is direct and plays a role in mitophagy (PubMed:35835849).</text>
</comment>
<comment type="subcellular location">
    <subcellularLocation>
        <location evidence="6">Mitochondrion inner membrane</location>
        <topology evidence="1">Single-pass type II membrane protein</topology>
        <orientation evidence="1">Intermembrane side</orientation>
    </subcellularLocation>
</comment>
<comment type="induction">
    <text evidence="3">Expressed in hyphae and highly induced during the necrotrophic stage of infection.</text>
</comment>
<comment type="disruption phenotype">
    <text evidence="3">Abrogates mitophagy (PubMed:35835849). Defective morphogenesis of mitochondrial cristae; cells are sensitive to menadione (generates reactive oxygen species in the mitochondrion) and the mitochondrial membrane potential is affected (PubMed:35835849). Decreases formation of secondary hyphae (PubMed:35835849). Decreases colony growth and reduces conidial production (PubMed:35835849). Decreases virulence on A.thaliana (PubMed:35835849).</text>
</comment>
<comment type="similarity">
    <text evidence="5">Belongs to the prohibitin family.</text>
</comment>
<dbReference type="EMBL" id="CACQ02002394">
    <property type="protein sequence ID" value="CCF37283.1"/>
    <property type="molecule type" value="Genomic_DNA"/>
</dbReference>
<dbReference type="EMBL" id="LTAN01000001">
    <property type="protein sequence ID" value="OBR15921.1"/>
    <property type="molecule type" value="Genomic_DNA"/>
</dbReference>
<dbReference type="RefSeq" id="XP_018164438.1">
    <property type="nucleotide sequence ID" value="XM_018296076.1"/>
</dbReference>
<dbReference type="SMR" id="H1VAN0"/>
<dbReference type="STRING" id="759273.H1VAN0"/>
<dbReference type="EnsemblFungi" id="CCF37283">
    <property type="protein sequence ID" value="CCF37283"/>
    <property type="gene ID" value="CH063_08657"/>
</dbReference>
<dbReference type="GeneID" id="28860183"/>
<dbReference type="KEGG" id="chig:CH63R_01101"/>
<dbReference type="VEuPathDB" id="FungiDB:CH63R_01101"/>
<dbReference type="eggNOG" id="KOG3090">
    <property type="taxonomic scope" value="Eukaryota"/>
</dbReference>
<dbReference type="HOGENOM" id="CLU_047969_0_2_1"/>
<dbReference type="OrthoDB" id="45740at1028384"/>
<dbReference type="PHI-base" id="PHI:123280"/>
<dbReference type="Proteomes" id="UP000007174">
    <property type="component" value="Unassembled WGS sequence"/>
</dbReference>
<dbReference type="Proteomes" id="UP000092177">
    <property type="component" value="Chromosome 1"/>
</dbReference>
<dbReference type="GO" id="GO:0035632">
    <property type="term" value="C:mitochondrial prohibitin complex"/>
    <property type="evidence" value="ECO:0000353"/>
    <property type="project" value="UniProtKB"/>
</dbReference>
<dbReference type="GO" id="GO:0005739">
    <property type="term" value="C:mitochondrion"/>
    <property type="evidence" value="ECO:0000314"/>
    <property type="project" value="UniProtKB"/>
</dbReference>
<dbReference type="GO" id="GO:0007005">
    <property type="term" value="P:mitochondrion organization"/>
    <property type="evidence" value="ECO:0007669"/>
    <property type="project" value="TreeGrafter"/>
</dbReference>
<dbReference type="GO" id="GO:0000423">
    <property type="term" value="P:mitophagy"/>
    <property type="evidence" value="ECO:0000315"/>
    <property type="project" value="UniProtKB"/>
</dbReference>
<dbReference type="CDD" id="cd03401">
    <property type="entry name" value="SPFH_prohibitin"/>
    <property type="match status" value="1"/>
</dbReference>
<dbReference type="FunFam" id="3.30.479.30:FF:000001">
    <property type="entry name" value="Prohibitin 2"/>
    <property type="match status" value="1"/>
</dbReference>
<dbReference type="Gene3D" id="3.30.479.30">
    <property type="entry name" value="Band 7 domain"/>
    <property type="match status" value="1"/>
</dbReference>
<dbReference type="InterPro" id="IPR001107">
    <property type="entry name" value="Band_7"/>
</dbReference>
<dbReference type="InterPro" id="IPR036013">
    <property type="entry name" value="Band_7/SPFH_dom_sf"/>
</dbReference>
<dbReference type="InterPro" id="IPR000163">
    <property type="entry name" value="Prohibitin"/>
</dbReference>
<dbReference type="PANTHER" id="PTHR23222">
    <property type="entry name" value="PROHIBITIN"/>
    <property type="match status" value="1"/>
</dbReference>
<dbReference type="PANTHER" id="PTHR23222:SF1">
    <property type="entry name" value="PROHIBITIN-2"/>
    <property type="match status" value="1"/>
</dbReference>
<dbReference type="Pfam" id="PF01145">
    <property type="entry name" value="Band_7"/>
    <property type="match status" value="1"/>
</dbReference>
<dbReference type="PRINTS" id="PR00679">
    <property type="entry name" value="PROHIBITIN"/>
</dbReference>
<dbReference type="SMART" id="SM00244">
    <property type="entry name" value="PHB"/>
    <property type="match status" value="1"/>
</dbReference>
<dbReference type="SUPFAM" id="SSF117892">
    <property type="entry name" value="Band 7/SPFH domain"/>
    <property type="match status" value="1"/>
</dbReference>
<evidence type="ECO:0000250" key="1">
    <source>
        <dbReference type="UniProtKB" id="P50085"/>
    </source>
</evidence>
<evidence type="ECO:0000255" key="2"/>
<evidence type="ECO:0000269" key="3">
    <source>
    </source>
</evidence>
<evidence type="ECO:0000303" key="4">
    <source>
    </source>
</evidence>
<evidence type="ECO:0000305" key="5"/>
<evidence type="ECO:0000305" key="6">
    <source>
    </source>
</evidence>
<evidence type="ECO:0000312" key="7">
    <source>
        <dbReference type="EMBL" id="CCF37283.1"/>
    </source>
</evidence>
<evidence type="ECO:0000312" key="8">
    <source>
        <dbReference type="EMBL" id="OBR15921.1"/>
    </source>
</evidence>
<evidence type="ECO:0000312" key="9">
    <source>
        <dbReference type="Proteomes" id="UP000007174"/>
    </source>
</evidence>
<evidence type="ECO:0000312" key="10">
    <source>
        <dbReference type="Proteomes" id="UP000092177"/>
    </source>
</evidence>
<keyword id="KW-0472">Membrane</keyword>
<keyword id="KW-0496">Mitochondrion</keyword>
<keyword id="KW-0999">Mitochondrion inner membrane</keyword>
<keyword id="KW-1185">Reference proteome</keyword>
<keyword id="KW-0735">Signal-anchor</keyword>
<keyword id="KW-0812">Transmembrane</keyword>
<keyword id="KW-1133">Transmembrane helix</keyword>
<protein>
    <recommendedName>
        <fullName evidence="4">Prohibitin-2</fullName>
    </recommendedName>
    <alternativeName>
        <fullName evidence="4">ChPHB2</fullName>
    </alternativeName>
</protein>
<sequence length="311" mass="34076">MSGGRSPMEEAYARLRQVAEQQQKRGGFGGGGLPGGPRGAGMGLAGLVLLGGAAFVAQNALFNVDGGHRAIKYRRTTGVSKEIYAEGTHFVIPWFETPVTYDVRAKPRNVASLTGTKDLQMVNITCRVLSRPDIAALPQIYRTLGTDYDERVLPSIVNEVLKSVVAQFNASQLITQREMVAKLVRENLSRRAARFNILLDDVSLTHLAFSPEFTAAVEAKQVAQQEAQRAAFVVDKARQEKQAMVVKAQGEARSAELIGDAIKKSKAYVELKKIENARFIAQQMQESGSKNRLLLDSEGLGLNVFEDREKN</sequence>
<name>PHB2_COLHI</name>
<accession>H1VAN0</accession>
<reference evidence="9" key="1">
    <citation type="journal article" date="2012" name="Nat. Genet.">
        <title>Lifestyle transitions in plant pathogenic Colletotrichum fungi deciphered by genome and transcriptome analyses.</title>
        <authorList>
            <person name="O'Connell R.J."/>
            <person name="Thon M.R."/>
            <person name="Hacquard S."/>
            <person name="Amyotte S.G."/>
            <person name="Kleemann J."/>
            <person name="Torres M.F."/>
            <person name="Damm U."/>
            <person name="Buiate E.A."/>
            <person name="Epstein L."/>
            <person name="Alkan N."/>
            <person name="Altmueller J."/>
            <person name="Alvarado-Balderrama L."/>
            <person name="Bauser C.A."/>
            <person name="Becker C."/>
            <person name="Birren B.W."/>
            <person name="Chen Z."/>
            <person name="Choi J."/>
            <person name="Crouch J.A."/>
            <person name="Duvick J.P."/>
            <person name="Farman M.A."/>
            <person name="Gan P."/>
            <person name="Heiman D."/>
            <person name="Henrissat B."/>
            <person name="Howard R.J."/>
            <person name="Kabbage M."/>
            <person name="Koch C."/>
            <person name="Kracher B."/>
            <person name="Kubo Y."/>
            <person name="Law A.D."/>
            <person name="Lebrun M.-H."/>
            <person name="Lee Y.-H."/>
            <person name="Miyara I."/>
            <person name="Moore N."/>
            <person name="Neumann U."/>
            <person name="Nordstroem K."/>
            <person name="Panaccione D.G."/>
            <person name="Panstruga R."/>
            <person name="Place M."/>
            <person name="Proctor R.H."/>
            <person name="Prusky D."/>
            <person name="Rech G."/>
            <person name="Reinhardt R."/>
            <person name="Rollins J.A."/>
            <person name="Rounsley S."/>
            <person name="Schardl C.L."/>
            <person name="Schwartz D.C."/>
            <person name="Shenoy N."/>
            <person name="Shirasu K."/>
            <person name="Sikhakolli U.R."/>
            <person name="Stueber K."/>
            <person name="Sukno S.A."/>
            <person name="Sweigard J.A."/>
            <person name="Takano Y."/>
            <person name="Takahara H."/>
            <person name="Trail F."/>
            <person name="van der Does H.C."/>
            <person name="Voll L.M."/>
            <person name="Will I."/>
            <person name="Young S."/>
            <person name="Zeng Q."/>
            <person name="Zhang J."/>
            <person name="Zhou S."/>
            <person name="Dickman M.B."/>
            <person name="Schulze-Lefert P."/>
            <person name="Ver Loren van Themaat E."/>
            <person name="Ma L.-J."/>
            <person name="Vaillancourt L.J."/>
        </authorList>
    </citation>
    <scope>NUCLEOTIDE SEQUENCE [LARGE SCALE GENOMIC DNA]</scope>
    <source>
        <strain evidence="9">IMI 349063</strain>
    </source>
</reference>
<reference evidence="10" key="2">
    <citation type="journal article" date="2017" name="BMC Genomics">
        <title>Gapless genome assembly of Colletotrichum higginsianum reveals chromosome structure and association of transposable elements with secondary metabolite gene clusters.</title>
        <authorList>
            <person name="Dallery J.-F."/>
            <person name="Lapalu N."/>
            <person name="Zampounis A."/>
            <person name="Pigne S."/>
            <person name="Luyten I."/>
            <person name="Amselem J."/>
            <person name="Wittenberg A.H.J."/>
            <person name="Zhou S."/>
            <person name="de Queiroz M.V."/>
            <person name="Robin G.P."/>
            <person name="Auger A."/>
            <person name="Hainaut M."/>
            <person name="Henrissat B."/>
            <person name="Kim K.-T."/>
            <person name="Lee Y.-H."/>
            <person name="Lespinet O."/>
            <person name="Schwartz D.C."/>
            <person name="Thon M.R."/>
            <person name="O'Connell R.J."/>
        </authorList>
    </citation>
    <scope>NUCLEOTIDE SEQUENCE [LARGE SCALE GENOMIC DNA]</scope>
    <source>
        <strain evidence="10">IMI 349063</strain>
    </source>
</reference>
<reference evidence="5" key="3">
    <citation type="journal article" date="2022" name="Commun. Biol.">
        <title>Mitochondrial prohibitin complex regulates fungal virulence via ATG24-assisted mitophagy.</title>
        <authorList>
            <person name="Yan Y."/>
            <person name="Tang J."/>
            <person name="Yuan Q."/>
            <person name="Liu C."/>
            <person name="Chen X."/>
            <person name="Liu H."/>
            <person name="Huang J."/>
            <person name="Bao C."/>
            <person name="Hsiang T."/>
            <person name="Zheng L."/>
        </authorList>
    </citation>
    <scope>FUNCTION</scope>
    <scope>IDENTIFICATION IN THE PROHIBITIN COMPLEX</scope>
    <scope>INTERACTION WITH ATG24</scope>
    <scope>SUBCELLULAR LOCATION</scope>
    <scope>INDUCTION</scope>
    <scope>DISRUPTION PHENOTYPE</scope>
</reference>